<feature type="signal peptide" evidence="2">
    <location>
        <begin position="1"/>
        <end position="17"/>
    </location>
</feature>
<feature type="propeptide" id="PRO_0000018574">
    <location>
        <begin position="18"/>
        <end position="36"/>
    </location>
</feature>
<feature type="chain" id="PRO_0000018575" description="Lysosomal acid alpha-glucosidase">
    <location>
        <begin position="37"/>
        <end position="923"/>
    </location>
</feature>
<feature type="active site" description="Nucleophile" evidence="3">
    <location>
        <position position="455"/>
    </location>
</feature>
<feature type="active site" evidence="1">
    <location>
        <position position="458"/>
    </location>
</feature>
<feature type="active site" description="Proton donor" evidence="1">
    <location>
        <position position="585"/>
    </location>
</feature>
<feature type="glycosylation site" description="N-linked (GlcNAc...) asparagine" evidence="2">
    <location>
        <position position="65"/>
    </location>
</feature>
<feature type="glycosylation site" description="N-linked (GlcNAc...) asparagine" evidence="2">
    <location>
        <position position="405"/>
    </location>
</feature>
<feature type="glycosylation site" description="N-linked (GlcNAc...) asparagine" evidence="2">
    <location>
        <position position="440"/>
    </location>
</feature>
<feature type="glycosylation site" description="N-linked (GlcNAc...) asparagine" evidence="2">
    <location>
        <position position="586"/>
    </location>
</feature>
<feature type="glycosylation site" description="N-linked (GlcNAc...) asparagine" evidence="2">
    <location>
        <position position="621"/>
    </location>
</feature>
<feature type="glycosylation site" description="N-linked (GlcNAc...) asparagine" evidence="2">
    <location>
        <position position="646"/>
    </location>
</feature>
<feature type="glycosylation site" description="N-linked (GlcNAc...) asparagine" evidence="2">
    <location>
        <position position="848"/>
    </location>
</feature>
<feature type="glycosylation site" description="N-linked (GlcNAc...) asparagine" evidence="2">
    <location>
        <position position="908"/>
    </location>
</feature>
<feature type="glycosylation site" description="N-linked (GlcNAc...) asparagine" evidence="2">
    <location>
        <position position="912"/>
    </location>
</feature>
<sequence>MKHQVLLPLLVTTAIIAGSVGVYTHSKPLLGQSQDQVLPPFTPPLQNGHIDLQGKYIVSTLDQVNATHINIYANYNGPEASYAMPKNKLITHILVSIVINDVNQLGIKITDRTYRHFEVPYSNLFPHDKVFNFPANNQFDITLPKRGEAFYLTIKRKDTGEVVFDTNNQFFVYSDLYHEFTVAMQNEFIYGLGERRNKQFLYDSGEYTFLNKDQYESVADGHPDQQTYGTHPMYLRRENSGNFHVVFLRNYNSIQAVYSKGKSLTYKVVGGLLEFKIFLGDKSPETSLKLYHSYVNGFNLHPFWAHGFHQCRWGYKTSEMMTTVWDTFNTNGLPFDTIWSDIDYMKDLTDFTIDTSRYDKAQMNTMLDRSVAAGVHWVPIIDAGIALGDVSNERGKELGVYQKSNKTGEDLIGCVWPGKVNYPDFNHPLSQEFWAEGLMNLTKNYGITPSGFWIDMNEFSNFINGEISEDQNCIMPGDTTTNPNYLGNSVEDFYTRIPFEVGGADHPQQEKTMSYDAPKYNYADAKTVYIPNYELREFDFHNLNGFSEGIATNYALKKMGNKLPFIISRSQIAGSGQFVQHWTGDNGSQWDFLQYSLGEIFNFNMYGIPMTGADICGFAQNTTAELCARWMQVGAFYPFSRNHNSNDTIPQEPYAFPDSTYVLDSSKKSLRLRYALLKQYYSHFVSSNGVGTVFRPTFFNFPDDASLLTNDQQFMIGDSLLGQPVLVQSATPARFSHSSYLTFPSSGAFYDFVTDVATLNAQRYTNANNGQIKNVKFDDIMPLYIREGYTVFTQLASTALRSRLLDSNFELHVALAKSGTSYTAKGKFITIQDYSDDNLIQKCIGANNCSFDIQVTGVVNGANLDLTIQIAGESAQTNFETINVNKIIPYAADLKFAASTATFTISKNGTINASIPLQAAQQE</sequence>
<accession>O00906</accession>
<protein>
    <recommendedName>
        <fullName>Lysosomal acid alpha-glucosidase</fullName>
        <ecNumber evidence="4">3.2.1.20</ecNumber>
    </recommendedName>
    <alternativeName>
        <fullName>Acid maltase</fullName>
    </alternativeName>
</protein>
<comment type="function">
    <text evidence="4">Essential for the degradation of glycogen to glucose in lysosomes. Has both alpha-1,4 and alpha-1,6-glucosidase activity.</text>
</comment>
<comment type="catalytic activity">
    <reaction evidence="4">
        <text>Hydrolysis of terminal, non-reducing (1-&gt;4)-linked alpha-D-glucose residues with release of alpha-D-glucose.</text>
        <dbReference type="EC" id="3.2.1.20"/>
    </reaction>
</comment>
<comment type="biophysicochemical properties">
    <phDependence>
        <text evidence="4">Optimum pH is 4.0.</text>
    </phDependence>
</comment>
<comment type="subcellular location">
    <subcellularLocation>
        <location evidence="4">Lysosome</location>
    </subcellularLocation>
    <subcellularLocation>
        <location evidence="4">Secreted</location>
    </subcellularLocation>
</comment>
<comment type="similarity">
    <text evidence="5">Belongs to the glycosyl hydrolase 31 family.</text>
</comment>
<keyword id="KW-0903">Direct protein sequencing</keyword>
<keyword id="KW-0325">Glycoprotein</keyword>
<keyword id="KW-0326">Glycosidase</keyword>
<keyword id="KW-0378">Hydrolase</keyword>
<keyword id="KW-0458">Lysosome</keyword>
<keyword id="KW-0964">Secreted</keyword>
<keyword id="KW-0732">Signal</keyword>
<organism>
    <name type="scientific">Tetrahymena pyriformis</name>
    <dbReference type="NCBI Taxonomy" id="5908"/>
    <lineage>
        <taxon>Eukaryota</taxon>
        <taxon>Sar</taxon>
        <taxon>Alveolata</taxon>
        <taxon>Ciliophora</taxon>
        <taxon>Intramacronucleata</taxon>
        <taxon>Oligohymenophorea</taxon>
        <taxon>Hymenostomatida</taxon>
        <taxon>Tetrahymenina</taxon>
        <taxon>Tetrahymenidae</taxon>
        <taxon>Tetrahymena</taxon>
    </lineage>
</organism>
<evidence type="ECO:0000250" key="1"/>
<evidence type="ECO:0000255" key="2"/>
<evidence type="ECO:0000255" key="3">
    <source>
        <dbReference type="PROSITE-ProRule" id="PRU10066"/>
    </source>
</evidence>
<evidence type="ECO:0000269" key="4">
    <source>
    </source>
</evidence>
<evidence type="ECO:0000305" key="5"/>
<name>AGLU_TETPY</name>
<dbReference type="EC" id="3.2.1.20" evidence="4"/>
<dbReference type="EMBL" id="D83384">
    <property type="protein sequence ID" value="BAA20462.1"/>
    <property type="molecule type" value="mRNA"/>
</dbReference>
<dbReference type="SMR" id="O00906"/>
<dbReference type="CAZy" id="GH31">
    <property type="family name" value="Glycoside Hydrolase Family 31"/>
</dbReference>
<dbReference type="GO" id="GO:0005576">
    <property type="term" value="C:extracellular region"/>
    <property type="evidence" value="ECO:0007669"/>
    <property type="project" value="UniProtKB-SubCell"/>
</dbReference>
<dbReference type="GO" id="GO:0005764">
    <property type="term" value="C:lysosome"/>
    <property type="evidence" value="ECO:0007669"/>
    <property type="project" value="UniProtKB-SubCell"/>
</dbReference>
<dbReference type="GO" id="GO:0004558">
    <property type="term" value="F:alpha-1,4-glucosidase activity"/>
    <property type="evidence" value="ECO:0007669"/>
    <property type="project" value="UniProtKB-EC"/>
</dbReference>
<dbReference type="GO" id="GO:0030246">
    <property type="term" value="F:carbohydrate binding"/>
    <property type="evidence" value="ECO:0007669"/>
    <property type="project" value="InterPro"/>
</dbReference>
<dbReference type="GO" id="GO:0005975">
    <property type="term" value="P:carbohydrate metabolic process"/>
    <property type="evidence" value="ECO:0007669"/>
    <property type="project" value="InterPro"/>
</dbReference>
<dbReference type="CDD" id="cd06602">
    <property type="entry name" value="GH31_MGAM_SI_GAA"/>
    <property type="match status" value="1"/>
</dbReference>
<dbReference type="CDD" id="cd14752">
    <property type="entry name" value="GH31_N"/>
    <property type="match status" value="1"/>
</dbReference>
<dbReference type="Gene3D" id="3.20.20.80">
    <property type="entry name" value="Glycosidases"/>
    <property type="match status" value="1"/>
</dbReference>
<dbReference type="Gene3D" id="2.60.40.1760">
    <property type="entry name" value="glycosyl hydrolase (family 31)"/>
    <property type="match status" value="1"/>
</dbReference>
<dbReference type="Gene3D" id="2.60.40.1180">
    <property type="entry name" value="Golgi alpha-mannosidase II"/>
    <property type="match status" value="1"/>
</dbReference>
<dbReference type="InterPro" id="IPR011013">
    <property type="entry name" value="Gal_mutarotase_sf_dom"/>
</dbReference>
<dbReference type="InterPro" id="IPR030458">
    <property type="entry name" value="Glyco_hydro_31_AS"/>
</dbReference>
<dbReference type="InterPro" id="IPR048395">
    <property type="entry name" value="Glyco_hydro_31_C"/>
</dbReference>
<dbReference type="InterPro" id="IPR030459">
    <property type="entry name" value="Glyco_hydro_31_CS"/>
</dbReference>
<dbReference type="InterPro" id="IPR000322">
    <property type="entry name" value="Glyco_hydro_31_TIM"/>
</dbReference>
<dbReference type="InterPro" id="IPR013780">
    <property type="entry name" value="Glyco_hydro_b"/>
</dbReference>
<dbReference type="InterPro" id="IPR017853">
    <property type="entry name" value="Glycoside_hydrolase_SF"/>
</dbReference>
<dbReference type="PANTHER" id="PTHR22762">
    <property type="entry name" value="ALPHA-GLUCOSIDASE"/>
    <property type="match status" value="1"/>
</dbReference>
<dbReference type="PANTHER" id="PTHR22762:SF133">
    <property type="entry name" value="P-TYPE DOMAIN-CONTAINING PROTEIN"/>
    <property type="match status" value="1"/>
</dbReference>
<dbReference type="Pfam" id="PF01055">
    <property type="entry name" value="Glyco_hydro_31_2nd"/>
    <property type="match status" value="1"/>
</dbReference>
<dbReference type="Pfam" id="PF21365">
    <property type="entry name" value="Glyco_hydro_31_3rd"/>
    <property type="match status" value="1"/>
</dbReference>
<dbReference type="SUPFAM" id="SSF51445">
    <property type="entry name" value="(Trans)glycosidases"/>
    <property type="match status" value="1"/>
</dbReference>
<dbReference type="SUPFAM" id="SSF74650">
    <property type="entry name" value="Galactose mutarotase-like"/>
    <property type="match status" value="1"/>
</dbReference>
<dbReference type="SUPFAM" id="SSF51011">
    <property type="entry name" value="Glycosyl hydrolase domain"/>
    <property type="match status" value="1"/>
</dbReference>
<dbReference type="PROSITE" id="PS00129">
    <property type="entry name" value="GLYCOSYL_HYDROL_F31_1"/>
    <property type="match status" value="1"/>
</dbReference>
<dbReference type="PROSITE" id="PS00707">
    <property type="entry name" value="GLYCOSYL_HYDROL_F31_2"/>
    <property type="match status" value="1"/>
</dbReference>
<reference key="1">
    <citation type="journal article" date="1996" name="J. Eukaryot. Microbiol.">
        <title>Molecular cloning of a gene encoding acid alpha-glucosidase from Tetrahymena pyriformis.</title>
        <authorList>
            <person name="Alam S."/>
            <person name="Nakashima S."/>
            <person name="Deyashiki Y."/>
            <person name="Banno Y."/>
            <person name="Hara A."/>
            <person name="Nozawa Y."/>
        </authorList>
    </citation>
    <scope>NUCLEOTIDE SEQUENCE [MRNA]</scope>
    <scope>PARTIAL PROTEIN SEQUENCE</scope>
    <scope>FUNCTION</scope>
    <scope>CATALYTIC ACTIVITY</scope>
    <scope>BIOPHYSICOCHEMICAL PROPERTIES</scope>
    <scope>SUBCELLULAR LOCATION</scope>
    <source>
        <strain>W</strain>
    </source>
</reference>
<proteinExistence type="evidence at protein level"/>